<feature type="chain" id="PRO_0000174767" description="Co-chaperonin GroES">
    <location>
        <begin position="1"/>
        <end position="94"/>
    </location>
</feature>
<name>CH10_LACAC</name>
<comment type="function">
    <text evidence="1">Together with the chaperonin GroEL, plays an essential role in assisting protein folding. The GroEL-GroES system forms a nano-cage that allows encapsulation of the non-native substrate proteins and provides a physical environment optimized to promote and accelerate protein folding. GroES binds to the apical surface of the GroEL ring, thereby capping the opening of the GroEL channel.</text>
</comment>
<comment type="subunit">
    <text evidence="1">Heptamer of 7 subunits arranged in a ring. Interacts with the chaperonin GroEL.</text>
</comment>
<comment type="subcellular location">
    <subcellularLocation>
        <location evidence="1">Cytoplasm</location>
    </subcellularLocation>
</comment>
<comment type="similarity">
    <text evidence="1">Belongs to the GroES chaperonin family.</text>
</comment>
<sequence>MLQPIGDRVIVKVKEEEEKTVGGIVLASNAKQKPTEGEVVAVGEGAYTSNGDKLPMVVKKGDVVLYDKYSGTNVEYEGEKYLVLHEKDILAIEK</sequence>
<evidence type="ECO:0000255" key="1">
    <source>
        <dbReference type="HAMAP-Rule" id="MF_00580"/>
    </source>
</evidence>
<proteinExistence type="inferred from homology"/>
<dbReference type="EMBL" id="AF300645">
    <property type="protein sequence ID" value="AAK97217.1"/>
    <property type="molecule type" value="Genomic_DNA"/>
</dbReference>
<dbReference type="EMBL" id="CP000033">
    <property type="protein sequence ID" value="AAV42296.1"/>
    <property type="molecule type" value="Genomic_DNA"/>
</dbReference>
<dbReference type="RefSeq" id="WP_003549156.1">
    <property type="nucleotide sequence ID" value="NC_006814.3"/>
</dbReference>
<dbReference type="RefSeq" id="YP_193327.1">
    <property type="nucleotide sequence ID" value="NC_006814.3"/>
</dbReference>
<dbReference type="SMR" id="Q93G08"/>
<dbReference type="STRING" id="272621.LBA0405"/>
<dbReference type="GeneID" id="93290495"/>
<dbReference type="KEGG" id="lac:LBA0405"/>
<dbReference type="PATRIC" id="fig|272621.13.peg.391"/>
<dbReference type="eggNOG" id="COG0234">
    <property type="taxonomic scope" value="Bacteria"/>
</dbReference>
<dbReference type="HOGENOM" id="CLU_132825_2_1_9"/>
<dbReference type="OrthoDB" id="9806791at2"/>
<dbReference type="BioCyc" id="LACI272621:G1G49-399-MONOMER"/>
<dbReference type="Proteomes" id="UP000006381">
    <property type="component" value="Chromosome"/>
</dbReference>
<dbReference type="GO" id="GO:0005737">
    <property type="term" value="C:cytoplasm"/>
    <property type="evidence" value="ECO:0007669"/>
    <property type="project" value="UniProtKB-SubCell"/>
</dbReference>
<dbReference type="GO" id="GO:0005524">
    <property type="term" value="F:ATP binding"/>
    <property type="evidence" value="ECO:0007669"/>
    <property type="project" value="InterPro"/>
</dbReference>
<dbReference type="GO" id="GO:0046872">
    <property type="term" value="F:metal ion binding"/>
    <property type="evidence" value="ECO:0007669"/>
    <property type="project" value="TreeGrafter"/>
</dbReference>
<dbReference type="GO" id="GO:0044183">
    <property type="term" value="F:protein folding chaperone"/>
    <property type="evidence" value="ECO:0007669"/>
    <property type="project" value="InterPro"/>
</dbReference>
<dbReference type="GO" id="GO:0051087">
    <property type="term" value="F:protein-folding chaperone binding"/>
    <property type="evidence" value="ECO:0007669"/>
    <property type="project" value="TreeGrafter"/>
</dbReference>
<dbReference type="GO" id="GO:0051082">
    <property type="term" value="F:unfolded protein binding"/>
    <property type="evidence" value="ECO:0007669"/>
    <property type="project" value="TreeGrafter"/>
</dbReference>
<dbReference type="GO" id="GO:0051085">
    <property type="term" value="P:chaperone cofactor-dependent protein refolding"/>
    <property type="evidence" value="ECO:0007669"/>
    <property type="project" value="TreeGrafter"/>
</dbReference>
<dbReference type="CDD" id="cd00320">
    <property type="entry name" value="cpn10"/>
    <property type="match status" value="1"/>
</dbReference>
<dbReference type="FunFam" id="2.30.33.40:FF:000001">
    <property type="entry name" value="10 kDa chaperonin"/>
    <property type="match status" value="1"/>
</dbReference>
<dbReference type="Gene3D" id="2.30.33.40">
    <property type="entry name" value="GroES chaperonin"/>
    <property type="match status" value="1"/>
</dbReference>
<dbReference type="HAMAP" id="MF_00580">
    <property type="entry name" value="CH10"/>
    <property type="match status" value="1"/>
</dbReference>
<dbReference type="InterPro" id="IPR020818">
    <property type="entry name" value="Chaperonin_GroES"/>
</dbReference>
<dbReference type="InterPro" id="IPR037124">
    <property type="entry name" value="Chaperonin_GroES_sf"/>
</dbReference>
<dbReference type="InterPro" id="IPR018369">
    <property type="entry name" value="Chaprnonin_Cpn10_CS"/>
</dbReference>
<dbReference type="InterPro" id="IPR011032">
    <property type="entry name" value="GroES-like_sf"/>
</dbReference>
<dbReference type="NCBIfam" id="NF001531">
    <property type="entry name" value="PRK00364.2-2"/>
    <property type="match status" value="1"/>
</dbReference>
<dbReference type="NCBIfam" id="NF001533">
    <property type="entry name" value="PRK00364.2-4"/>
    <property type="match status" value="1"/>
</dbReference>
<dbReference type="NCBIfam" id="NF001534">
    <property type="entry name" value="PRK00364.2-5"/>
    <property type="match status" value="1"/>
</dbReference>
<dbReference type="PANTHER" id="PTHR10772">
    <property type="entry name" value="10 KDA HEAT SHOCK PROTEIN"/>
    <property type="match status" value="1"/>
</dbReference>
<dbReference type="PANTHER" id="PTHR10772:SF58">
    <property type="entry name" value="CO-CHAPERONIN GROES"/>
    <property type="match status" value="1"/>
</dbReference>
<dbReference type="Pfam" id="PF00166">
    <property type="entry name" value="Cpn10"/>
    <property type="match status" value="1"/>
</dbReference>
<dbReference type="PRINTS" id="PR00297">
    <property type="entry name" value="CHAPERONIN10"/>
</dbReference>
<dbReference type="SMART" id="SM00883">
    <property type="entry name" value="Cpn10"/>
    <property type="match status" value="1"/>
</dbReference>
<dbReference type="SUPFAM" id="SSF50129">
    <property type="entry name" value="GroES-like"/>
    <property type="match status" value="1"/>
</dbReference>
<dbReference type="PROSITE" id="PS00681">
    <property type="entry name" value="CHAPERONINS_CPN10"/>
    <property type="match status" value="1"/>
</dbReference>
<keyword id="KW-0143">Chaperone</keyword>
<keyword id="KW-0963">Cytoplasm</keyword>
<keyword id="KW-1185">Reference proteome</keyword>
<organism>
    <name type="scientific">Lactobacillus acidophilus (strain ATCC 700396 / NCK56 / N2 / NCFM)</name>
    <dbReference type="NCBI Taxonomy" id="272621"/>
    <lineage>
        <taxon>Bacteria</taxon>
        <taxon>Bacillati</taxon>
        <taxon>Bacillota</taxon>
        <taxon>Bacilli</taxon>
        <taxon>Lactobacillales</taxon>
        <taxon>Lactobacillaceae</taxon>
        <taxon>Lactobacillus</taxon>
    </lineage>
</organism>
<reference key="1">
    <citation type="submission" date="2000-08" db="EMBL/GenBank/DDBJ databases">
        <title>Characterization of the Lactobacillus acidophilus CRL 639 groESL operon.</title>
        <authorList>
            <person name="Lorca G.L."/>
            <person name="Font de Valdez G."/>
        </authorList>
    </citation>
    <scope>NUCLEOTIDE SEQUENCE [GENOMIC DNA]</scope>
    <source>
        <strain>CRL 639</strain>
    </source>
</reference>
<reference key="2">
    <citation type="journal article" date="2005" name="Proc. Natl. Acad. Sci. U.S.A.">
        <title>Complete genome sequence of the probiotic lactic acid bacterium Lactobacillus acidophilus NCFM.</title>
        <authorList>
            <person name="Altermann E."/>
            <person name="Russell W.M."/>
            <person name="Azcarate-Peril M.A."/>
            <person name="Barrangou R."/>
            <person name="Buck B.L."/>
            <person name="McAuliffe O."/>
            <person name="Souther N."/>
            <person name="Dobson A."/>
            <person name="Duong T."/>
            <person name="Callanan M."/>
            <person name="Lick S."/>
            <person name="Hamrick A."/>
            <person name="Cano R."/>
            <person name="Klaenhammer T.R."/>
        </authorList>
    </citation>
    <scope>NUCLEOTIDE SEQUENCE [LARGE SCALE GENOMIC DNA]</scope>
    <source>
        <strain>ATCC 700396 / NCK56 / N2 / NCFM</strain>
    </source>
</reference>
<accession>Q93G08</accession>
<accession>Q5FLX8</accession>
<protein>
    <recommendedName>
        <fullName evidence="1">Co-chaperonin GroES</fullName>
    </recommendedName>
    <alternativeName>
        <fullName evidence="1">10 kDa chaperonin</fullName>
    </alternativeName>
    <alternativeName>
        <fullName evidence="1">Chaperonin-10</fullName>
        <shortName evidence="1">Cpn10</shortName>
    </alternativeName>
</protein>
<gene>
    <name evidence="1" type="primary">groES</name>
    <name evidence="1" type="synonym">groS</name>
    <name type="ordered locus">LBA0405</name>
</gene>